<proteinExistence type="evidence at protein level"/>
<sequence length="948" mass="108291">MAEPLAVETKPLSNGNANGNAVGIAESASAVFQEKLKLQQQEESNEIAAVPKYGLKLKFDHVWPEKRIQNVRASIRQTLPMVPLVCRYAAYYWKVSREGRRVYMDYYYMENGKQIYGVPIGGIGGGTIGRGYAGEFCRFQMRPGIYEYNVVLANQFIVTIKDPKGCTIFQSLLSKCSTRDKTSDPDGDPDGERTKCQLPNCSSRAKQPLSAWHSNIEDTRCSYTGLYPRSWTEYDLSHYGVRLTCRQVSPVIPHEYRESSLPCAVFVWSVENVCDQERKVSITFTFKNGTGNKKQDAEGGAESQLISEGNAKGVSIRQKISEMPCSYNLACRVLPEISITRCPQFDPAGNGEQLWAQLKEHGQLSEHPTSEALKTKDIGVAVCGQVALKPMASHDLEFVLAWDMPKIQFPRKMQTHTRYYTKYFDDSGDSGPRICEYALRQYSTWERLIDAWQRPILNDETLPDWYKCAIFNQLYFISDGGTIWLKCDSSLGKELAYDDPRLAYGRFGYLEGHEYRMYNTYDVHFYASPALAHLWPNLQVSLQYDFKDAIAAELNDTRKMLYDGKVMPRKVKNCVPHDLGDPDEEPFTLINCYNIHDVNDWKDLNTKFVLQVYRDYYVLNELAQAQSDNASKFSSIEFIDKESLYELYSQDNKRKNSADEKQQNRKSASMYINETNGKVYLMDAIGYLKAMYASCKAIMERTIEYDKDNDGLIENTKMPDQTYDSWVMDGPSAYCSGLWLAALQAMSAMATILDQPNDCLRYQDILEKGKRSLEEKLWNGSYYRFDLSHSHRDTIMADQLCGHWYLKSCGFDYEIYPKENVRTALKRIYDNNVMGFHEGNIGAANGFIANASEPTKPGHVDNSNIQAEEVWPGVVYALAATMIQEGMFEEAFQTAGGMYKTLSQRIGMNFETPEALYGEKRYRSIGYMRPLSIWSMQVALERRRAQRD</sequence>
<evidence type="ECO:0000250" key="1"/>
<evidence type="ECO:0000255" key="2"/>
<evidence type="ECO:0000256" key="3">
    <source>
        <dbReference type="SAM" id="MobiDB-lite"/>
    </source>
</evidence>
<evidence type="ECO:0000269" key="4">
    <source>
    </source>
</evidence>
<evidence type="ECO:0000305" key="5"/>
<protein>
    <recommendedName>
        <fullName>Non-lysosomal glucosylceramidase</fullName>
        <shortName>NLGase</shortName>
        <ecNumber>3.2.1.45</ecNumber>
    </recommendedName>
</protein>
<reference key="1">
    <citation type="journal article" date="2000" name="Science">
        <title>The genome sequence of Drosophila melanogaster.</title>
        <authorList>
            <person name="Adams M.D."/>
            <person name="Celniker S.E."/>
            <person name="Holt R.A."/>
            <person name="Evans C.A."/>
            <person name="Gocayne J.D."/>
            <person name="Amanatides P.G."/>
            <person name="Scherer S.E."/>
            <person name="Li P.W."/>
            <person name="Hoskins R.A."/>
            <person name="Galle R.F."/>
            <person name="George R.A."/>
            <person name="Lewis S.E."/>
            <person name="Richards S."/>
            <person name="Ashburner M."/>
            <person name="Henderson S.N."/>
            <person name="Sutton G.G."/>
            <person name="Wortman J.R."/>
            <person name="Yandell M.D."/>
            <person name="Zhang Q."/>
            <person name="Chen L.X."/>
            <person name="Brandon R.C."/>
            <person name="Rogers Y.-H.C."/>
            <person name="Blazej R.G."/>
            <person name="Champe M."/>
            <person name="Pfeiffer B.D."/>
            <person name="Wan K.H."/>
            <person name="Doyle C."/>
            <person name="Baxter E.G."/>
            <person name="Helt G."/>
            <person name="Nelson C.R."/>
            <person name="Miklos G.L.G."/>
            <person name="Abril J.F."/>
            <person name="Agbayani A."/>
            <person name="An H.-J."/>
            <person name="Andrews-Pfannkoch C."/>
            <person name="Baldwin D."/>
            <person name="Ballew R.M."/>
            <person name="Basu A."/>
            <person name="Baxendale J."/>
            <person name="Bayraktaroglu L."/>
            <person name="Beasley E.M."/>
            <person name="Beeson K.Y."/>
            <person name="Benos P.V."/>
            <person name="Berman B.P."/>
            <person name="Bhandari D."/>
            <person name="Bolshakov S."/>
            <person name="Borkova D."/>
            <person name="Botchan M.R."/>
            <person name="Bouck J."/>
            <person name="Brokstein P."/>
            <person name="Brottier P."/>
            <person name="Burtis K.C."/>
            <person name="Busam D.A."/>
            <person name="Butler H."/>
            <person name="Cadieu E."/>
            <person name="Center A."/>
            <person name="Chandra I."/>
            <person name="Cherry J.M."/>
            <person name="Cawley S."/>
            <person name="Dahlke C."/>
            <person name="Davenport L.B."/>
            <person name="Davies P."/>
            <person name="de Pablos B."/>
            <person name="Delcher A."/>
            <person name="Deng Z."/>
            <person name="Mays A.D."/>
            <person name="Dew I."/>
            <person name="Dietz S.M."/>
            <person name="Dodson K."/>
            <person name="Doup L.E."/>
            <person name="Downes M."/>
            <person name="Dugan-Rocha S."/>
            <person name="Dunkov B.C."/>
            <person name="Dunn P."/>
            <person name="Durbin K.J."/>
            <person name="Evangelista C.C."/>
            <person name="Ferraz C."/>
            <person name="Ferriera S."/>
            <person name="Fleischmann W."/>
            <person name="Fosler C."/>
            <person name="Gabrielian A.E."/>
            <person name="Garg N.S."/>
            <person name="Gelbart W.M."/>
            <person name="Glasser K."/>
            <person name="Glodek A."/>
            <person name="Gong F."/>
            <person name="Gorrell J.H."/>
            <person name="Gu Z."/>
            <person name="Guan P."/>
            <person name="Harris M."/>
            <person name="Harris N.L."/>
            <person name="Harvey D.A."/>
            <person name="Heiman T.J."/>
            <person name="Hernandez J.R."/>
            <person name="Houck J."/>
            <person name="Hostin D."/>
            <person name="Houston K.A."/>
            <person name="Howland T.J."/>
            <person name="Wei M.-H."/>
            <person name="Ibegwam C."/>
            <person name="Jalali M."/>
            <person name="Kalush F."/>
            <person name="Karpen G.H."/>
            <person name="Ke Z."/>
            <person name="Kennison J.A."/>
            <person name="Ketchum K.A."/>
            <person name="Kimmel B.E."/>
            <person name="Kodira C.D."/>
            <person name="Kraft C.L."/>
            <person name="Kravitz S."/>
            <person name="Kulp D."/>
            <person name="Lai Z."/>
            <person name="Lasko P."/>
            <person name="Lei Y."/>
            <person name="Levitsky A.A."/>
            <person name="Li J.H."/>
            <person name="Li Z."/>
            <person name="Liang Y."/>
            <person name="Lin X."/>
            <person name="Liu X."/>
            <person name="Mattei B."/>
            <person name="McIntosh T.C."/>
            <person name="McLeod M.P."/>
            <person name="McPherson D."/>
            <person name="Merkulov G."/>
            <person name="Milshina N.V."/>
            <person name="Mobarry C."/>
            <person name="Morris J."/>
            <person name="Moshrefi A."/>
            <person name="Mount S.M."/>
            <person name="Moy M."/>
            <person name="Murphy B."/>
            <person name="Murphy L."/>
            <person name="Muzny D.M."/>
            <person name="Nelson D.L."/>
            <person name="Nelson D.R."/>
            <person name="Nelson K.A."/>
            <person name="Nixon K."/>
            <person name="Nusskern D.R."/>
            <person name="Pacleb J.M."/>
            <person name="Palazzolo M."/>
            <person name="Pittman G.S."/>
            <person name="Pan S."/>
            <person name="Pollard J."/>
            <person name="Puri V."/>
            <person name="Reese M.G."/>
            <person name="Reinert K."/>
            <person name="Remington K."/>
            <person name="Saunders R.D.C."/>
            <person name="Scheeler F."/>
            <person name="Shen H."/>
            <person name="Shue B.C."/>
            <person name="Siden-Kiamos I."/>
            <person name="Simpson M."/>
            <person name="Skupski M.P."/>
            <person name="Smith T.J."/>
            <person name="Spier E."/>
            <person name="Spradling A.C."/>
            <person name="Stapleton M."/>
            <person name="Strong R."/>
            <person name="Sun E."/>
            <person name="Svirskas R."/>
            <person name="Tector C."/>
            <person name="Turner R."/>
            <person name="Venter E."/>
            <person name="Wang A.H."/>
            <person name="Wang X."/>
            <person name="Wang Z.-Y."/>
            <person name="Wassarman D.A."/>
            <person name="Weinstock G.M."/>
            <person name="Weissenbach J."/>
            <person name="Williams S.M."/>
            <person name="Woodage T."/>
            <person name="Worley K.C."/>
            <person name="Wu D."/>
            <person name="Yang S."/>
            <person name="Yao Q.A."/>
            <person name="Ye J."/>
            <person name="Yeh R.-F."/>
            <person name="Zaveri J.S."/>
            <person name="Zhan M."/>
            <person name="Zhang G."/>
            <person name="Zhao Q."/>
            <person name="Zheng L."/>
            <person name="Zheng X.H."/>
            <person name="Zhong F.N."/>
            <person name="Zhong W."/>
            <person name="Zhou X."/>
            <person name="Zhu S.C."/>
            <person name="Zhu X."/>
            <person name="Smith H.O."/>
            <person name="Gibbs R.A."/>
            <person name="Myers E.W."/>
            <person name="Rubin G.M."/>
            <person name="Venter J.C."/>
        </authorList>
    </citation>
    <scope>NUCLEOTIDE SEQUENCE [LARGE SCALE GENOMIC DNA]</scope>
    <source>
        <strain>Berkeley</strain>
    </source>
</reference>
<reference key="2">
    <citation type="journal article" date="2002" name="Genome Biol.">
        <title>Annotation of the Drosophila melanogaster euchromatic genome: a systematic review.</title>
        <authorList>
            <person name="Misra S."/>
            <person name="Crosby M.A."/>
            <person name="Mungall C.J."/>
            <person name="Matthews B.B."/>
            <person name="Campbell K.S."/>
            <person name="Hradecky P."/>
            <person name="Huang Y."/>
            <person name="Kaminker J.S."/>
            <person name="Millburn G.H."/>
            <person name="Prochnik S.E."/>
            <person name="Smith C.D."/>
            <person name="Tupy J.L."/>
            <person name="Whitfield E.J."/>
            <person name="Bayraktaroglu L."/>
            <person name="Berman B.P."/>
            <person name="Bettencourt B.R."/>
            <person name="Celniker S.E."/>
            <person name="de Grey A.D.N.J."/>
            <person name="Drysdale R.A."/>
            <person name="Harris N.L."/>
            <person name="Richter J."/>
            <person name="Russo S."/>
            <person name="Schroeder A.J."/>
            <person name="Shu S.Q."/>
            <person name="Stapleton M."/>
            <person name="Yamada C."/>
            <person name="Ashburner M."/>
            <person name="Gelbart W.M."/>
            <person name="Rubin G.M."/>
            <person name="Lewis S.E."/>
        </authorList>
    </citation>
    <scope>GENOME REANNOTATION</scope>
    <source>
        <strain>Berkeley</strain>
    </source>
</reference>
<reference key="3">
    <citation type="submission" date="2008-09" db="EMBL/GenBank/DDBJ databases">
        <authorList>
            <person name="Stapleton M."/>
            <person name="Carlson J.W."/>
            <person name="Booth B."/>
            <person name="Chavez C."/>
            <person name="Frise E."/>
            <person name="George R.A."/>
            <person name="Pacleb J.M."/>
            <person name="Park S."/>
            <person name="Wan K.H."/>
            <person name="Yu C."/>
            <person name="Celniker S.E."/>
        </authorList>
    </citation>
    <scope>NUCLEOTIDE SEQUENCE [LARGE SCALE MRNA]</scope>
    <source>
        <strain>Berkeley</strain>
        <tissue>Embryo</tissue>
    </source>
</reference>
<reference key="4">
    <citation type="journal article" date="2002" name="Genome Biol.">
        <title>A Drosophila full-length cDNA resource.</title>
        <authorList>
            <person name="Stapleton M."/>
            <person name="Carlson J.W."/>
            <person name="Brokstein P."/>
            <person name="Yu C."/>
            <person name="Champe M."/>
            <person name="George R.A."/>
            <person name="Guarin H."/>
            <person name="Kronmiller B."/>
            <person name="Pacleb J.M."/>
            <person name="Park S."/>
            <person name="Wan K.H."/>
            <person name="Rubin G.M."/>
            <person name="Celniker S.E."/>
        </authorList>
    </citation>
    <scope>NUCLEOTIDE SEQUENCE [LARGE SCALE MRNA] OF 466-948</scope>
    <source>
        <strain>Berkeley</strain>
        <tissue>Head</tissue>
    </source>
</reference>
<reference key="5">
    <citation type="journal article" date="2008" name="J. Proteome Res.">
        <title>Phosphoproteome analysis of Drosophila melanogaster embryos.</title>
        <authorList>
            <person name="Zhai B."/>
            <person name="Villen J."/>
            <person name="Beausoleil S.A."/>
            <person name="Mintseris J."/>
            <person name="Gygi S.P."/>
        </authorList>
    </citation>
    <scope>PHOSPHORYLATION [LARGE SCALE ANALYSIS] AT SER-214; SER-667 AND SER-669</scope>
    <scope>IDENTIFICATION BY MASS SPECTROMETRY</scope>
    <source>
        <tissue>Embryo</tissue>
    </source>
</reference>
<feature type="chain" id="PRO_0000283761" description="Non-lysosomal glucosylceramidase">
    <location>
        <begin position="1"/>
        <end position="948"/>
    </location>
</feature>
<feature type="topological domain" description="Extracellular" evidence="2">
    <location>
        <begin position="1"/>
        <end position="736"/>
    </location>
</feature>
<feature type="transmembrane region" description="Helical" evidence="2">
    <location>
        <begin position="737"/>
        <end position="753"/>
    </location>
</feature>
<feature type="topological domain" description="Cytoplasmic" evidence="2">
    <location>
        <begin position="754"/>
        <end position="948"/>
    </location>
</feature>
<feature type="region of interest" description="Disordered" evidence="3">
    <location>
        <begin position="177"/>
        <end position="197"/>
    </location>
</feature>
<feature type="compositionally biased region" description="Basic and acidic residues" evidence="3">
    <location>
        <begin position="177"/>
        <end position="195"/>
    </location>
</feature>
<feature type="modified residue" description="Phosphoserine" evidence="4">
    <location>
        <position position="214"/>
    </location>
</feature>
<feature type="modified residue" description="Phosphoserine" evidence="4">
    <location>
        <position position="667"/>
    </location>
</feature>
<feature type="modified residue" description="Phosphoserine" evidence="4">
    <location>
        <position position="669"/>
    </location>
</feature>
<feature type="glycosylation site" description="N-linked (GlcNAc...) asparagine" evidence="2">
    <location>
        <position position="200"/>
    </location>
</feature>
<feature type="glycosylation site" description="N-linked (GlcNAc...) asparagine" evidence="2">
    <location>
        <position position="288"/>
    </location>
</feature>
<feature type="glycosylation site" description="N-linked (GlcNAc...) asparagine" evidence="2">
    <location>
        <position position="555"/>
    </location>
</feature>
<feature type="glycosylation site" description="N-linked (GlcNAc...) asparagine" evidence="2">
    <location>
        <position position="629"/>
    </location>
</feature>
<feature type="glycosylation site" description="N-linked (GlcNAc...) asparagine" evidence="2">
    <location>
        <position position="673"/>
    </location>
</feature>
<name>C3390_DROME</name>
<dbReference type="EC" id="3.2.1.45"/>
<dbReference type="EMBL" id="AE014134">
    <property type="protein sequence ID" value="AAO41192.2"/>
    <property type="molecule type" value="Genomic_DNA"/>
</dbReference>
<dbReference type="EMBL" id="BT024218">
    <property type="protein sequence ID" value="ABC86280.1"/>
    <property type="status" value="ALT_FRAME"/>
    <property type="molecule type" value="mRNA"/>
</dbReference>
<dbReference type="EMBL" id="BT044085">
    <property type="protein sequence ID" value="ACH92150.1"/>
    <property type="molecule type" value="mRNA"/>
</dbReference>
<dbReference type="EMBL" id="AY058463">
    <property type="protein sequence ID" value="AAL13692.1"/>
    <property type="status" value="ALT_SEQ"/>
    <property type="molecule type" value="mRNA"/>
</dbReference>
<dbReference type="RefSeq" id="NP_788055.2">
    <property type="nucleotide sequence ID" value="NM_176041.2"/>
</dbReference>
<dbReference type="SMR" id="Q7KT91"/>
<dbReference type="BioGRID" id="60860">
    <property type="interactions" value="1"/>
</dbReference>
<dbReference type="FunCoup" id="Q7KT91">
    <property type="interactions" value="556"/>
</dbReference>
<dbReference type="STRING" id="7227.FBpp0080197"/>
<dbReference type="CAZy" id="GH116">
    <property type="family name" value="Glycoside Hydrolase Family 116"/>
</dbReference>
<dbReference type="GlyGen" id="Q7KT91">
    <property type="glycosylation" value="5 sites"/>
</dbReference>
<dbReference type="iPTMnet" id="Q7KT91"/>
<dbReference type="PaxDb" id="7227-FBpp0080197"/>
<dbReference type="DNASU" id="34835"/>
<dbReference type="EnsemblMetazoa" id="FBtr0080624">
    <property type="protein sequence ID" value="FBpp0080197"/>
    <property type="gene ID" value="FBgn0028916"/>
</dbReference>
<dbReference type="GeneID" id="34835"/>
<dbReference type="KEGG" id="dme:Dmel_CG33090"/>
<dbReference type="UCSC" id="CG33090-RB">
    <property type="organism name" value="d. melanogaster"/>
</dbReference>
<dbReference type="AGR" id="FB:FBgn0028916"/>
<dbReference type="FlyBase" id="FBgn0028916">
    <property type="gene designation" value="CG33090"/>
</dbReference>
<dbReference type="VEuPathDB" id="VectorBase:FBgn0028916"/>
<dbReference type="eggNOG" id="KOG2119">
    <property type="taxonomic scope" value="Eukaryota"/>
</dbReference>
<dbReference type="GeneTree" id="ENSGT00390000010998"/>
<dbReference type="InParanoid" id="Q7KT91"/>
<dbReference type="OMA" id="HDLGAPN"/>
<dbReference type="OrthoDB" id="730489at2759"/>
<dbReference type="PhylomeDB" id="Q7KT91"/>
<dbReference type="Reactome" id="R-DME-9840310">
    <property type="pathway name" value="Glycosphingolipid catabolism"/>
</dbReference>
<dbReference type="BioGRID-ORCS" id="34835">
    <property type="hits" value="0 hits in 1 CRISPR screen"/>
</dbReference>
<dbReference type="GenomeRNAi" id="34835"/>
<dbReference type="PRO" id="PR:Q7KT91"/>
<dbReference type="Proteomes" id="UP000000803">
    <property type="component" value="Chromosome 2L"/>
</dbReference>
<dbReference type="Bgee" id="FBgn0028916">
    <property type="expression patterns" value="Expressed in adult Malpighian tubule principal cell of lower segment in Malpighian tubule and 142 other cell types or tissues"/>
</dbReference>
<dbReference type="ExpressionAtlas" id="Q7KT91">
    <property type="expression patterns" value="baseline and differential"/>
</dbReference>
<dbReference type="GO" id="GO:0016020">
    <property type="term" value="C:membrane"/>
    <property type="evidence" value="ECO:0000250"/>
    <property type="project" value="UniProtKB"/>
</dbReference>
<dbReference type="GO" id="GO:0005886">
    <property type="term" value="C:plasma membrane"/>
    <property type="evidence" value="ECO:0007669"/>
    <property type="project" value="UniProtKB-SubCell"/>
</dbReference>
<dbReference type="GO" id="GO:0008422">
    <property type="term" value="F:beta-glucosidase activity"/>
    <property type="evidence" value="ECO:0000250"/>
    <property type="project" value="UniProtKB"/>
</dbReference>
<dbReference type="GO" id="GO:0004348">
    <property type="term" value="F:glucosylceramidase activity"/>
    <property type="evidence" value="ECO:0007669"/>
    <property type="project" value="UniProtKB-EC"/>
</dbReference>
<dbReference type="GO" id="GO:0046527">
    <property type="term" value="F:glucosyltransferase activity"/>
    <property type="evidence" value="ECO:0000250"/>
    <property type="project" value="FlyBase"/>
</dbReference>
<dbReference type="GO" id="GO:0008206">
    <property type="term" value="P:bile acid metabolic process"/>
    <property type="evidence" value="ECO:0000250"/>
    <property type="project" value="UniProtKB"/>
</dbReference>
<dbReference type="GO" id="GO:0005975">
    <property type="term" value="P:carbohydrate metabolic process"/>
    <property type="evidence" value="ECO:0007669"/>
    <property type="project" value="InterPro"/>
</dbReference>
<dbReference type="GO" id="GO:0006680">
    <property type="term" value="P:glucosylceramide catabolic process"/>
    <property type="evidence" value="ECO:0007669"/>
    <property type="project" value="InterPro"/>
</dbReference>
<dbReference type="GO" id="GO:0016139">
    <property type="term" value="P:glycoside catabolic process"/>
    <property type="evidence" value="ECO:0000250"/>
    <property type="project" value="UniProtKB"/>
</dbReference>
<dbReference type="Gene3D" id="1.50.10.10">
    <property type="match status" value="1"/>
</dbReference>
<dbReference type="InterPro" id="IPR008928">
    <property type="entry name" value="6-hairpin_glycosidase_sf"/>
</dbReference>
<dbReference type="InterPro" id="IPR012341">
    <property type="entry name" value="6hp_glycosidase-like_sf"/>
</dbReference>
<dbReference type="InterPro" id="IPR014551">
    <property type="entry name" value="B_Glucosidase_GBA2-typ"/>
</dbReference>
<dbReference type="InterPro" id="IPR006775">
    <property type="entry name" value="GH116_catalytic"/>
</dbReference>
<dbReference type="InterPro" id="IPR024462">
    <property type="entry name" value="GH116_N"/>
</dbReference>
<dbReference type="InterPro" id="IPR052566">
    <property type="entry name" value="Non-lysos_glucosylceramidase"/>
</dbReference>
<dbReference type="PANTHER" id="PTHR12654">
    <property type="entry name" value="BILE ACID BETA-GLUCOSIDASE-RELATED"/>
    <property type="match status" value="1"/>
</dbReference>
<dbReference type="PANTHER" id="PTHR12654:SF0">
    <property type="entry name" value="NON-LYSOSOMAL GLUCOSYLCERAMIDASE"/>
    <property type="match status" value="1"/>
</dbReference>
<dbReference type="Pfam" id="PF04685">
    <property type="entry name" value="DUF608"/>
    <property type="match status" value="1"/>
</dbReference>
<dbReference type="Pfam" id="PF12215">
    <property type="entry name" value="Glyco_hydr_116N"/>
    <property type="match status" value="1"/>
</dbReference>
<dbReference type="PIRSF" id="PIRSF028944">
    <property type="entry name" value="Beta_gluc_GBA2"/>
    <property type="match status" value="1"/>
</dbReference>
<dbReference type="SUPFAM" id="SSF48208">
    <property type="entry name" value="Six-hairpin glycosidases"/>
    <property type="match status" value="1"/>
</dbReference>
<organism>
    <name type="scientific">Drosophila melanogaster</name>
    <name type="common">Fruit fly</name>
    <dbReference type="NCBI Taxonomy" id="7227"/>
    <lineage>
        <taxon>Eukaryota</taxon>
        <taxon>Metazoa</taxon>
        <taxon>Ecdysozoa</taxon>
        <taxon>Arthropoda</taxon>
        <taxon>Hexapoda</taxon>
        <taxon>Insecta</taxon>
        <taxon>Pterygota</taxon>
        <taxon>Neoptera</taxon>
        <taxon>Endopterygota</taxon>
        <taxon>Diptera</taxon>
        <taxon>Brachycera</taxon>
        <taxon>Muscomorpha</taxon>
        <taxon>Ephydroidea</taxon>
        <taxon>Drosophilidae</taxon>
        <taxon>Drosophila</taxon>
        <taxon>Sophophora</taxon>
    </lineage>
</organism>
<keyword id="KW-1003">Cell membrane</keyword>
<keyword id="KW-0325">Glycoprotein</keyword>
<keyword id="KW-0326">Glycosidase</keyword>
<keyword id="KW-0378">Hydrolase</keyword>
<keyword id="KW-0443">Lipid metabolism</keyword>
<keyword id="KW-0472">Membrane</keyword>
<keyword id="KW-0597">Phosphoprotein</keyword>
<keyword id="KW-1185">Reference proteome</keyword>
<keyword id="KW-0746">Sphingolipid metabolism</keyword>
<keyword id="KW-0812">Transmembrane</keyword>
<keyword id="KW-1133">Transmembrane helix</keyword>
<accession>Q7KT91</accession>
<accession>B5RIG1</accession>
<accession>Q29R22</accession>
<accession>Q95TX3</accession>
<gene>
    <name type="ORF">CG33090</name>
</gene>
<comment type="function">
    <text evidence="1">Non-lysosomal glucosylceramidase that catalyzes the conversion of glucosylceramide to free glucose and ceramide.</text>
</comment>
<comment type="catalytic activity">
    <reaction>
        <text>a beta-D-glucosyl-(1&lt;-&gt;1')-N-acylsphing-4-enine + H2O = an N-acylsphing-4-enine + D-glucose</text>
        <dbReference type="Rhea" id="RHEA:13269"/>
        <dbReference type="ChEBI" id="CHEBI:4167"/>
        <dbReference type="ChEBI" id="CHEBI:15377"/>
        <dbReference type="ChEBI" id="CHEBI:22801"/>
        <dbReference type="ChEBI" id="CHEBI:52639"/>
        <dbReference type="EC" id="3.2.1.45"/>
    </reaction>
</comment>
<comment type="subcellular location">
    <subcellularLocation>
        <location evidence="5">Cell membrane</location>
        <topology evidence="5">Single-pass membrane protein</topology>
    </subcellularLocation>
</comment>
<comment type="similarity">
    <text evidence="5">Belongs to the non-lysosomal glucosylceramidase family.</text>
</comment>
<comment type="sequence caution" evidence="5">
    <conflict type="erroneous initiation">
        <sequence resource="EMBL-CDS" id="AAL13692"/>
    </conflict>
    <text>Extended N-terminus.</text>
</comment>
<comment type="sequence caution" evidence="5">
    <conflict type="frameshift">
        <sequence resource="EMBL-CDS" id="AAL13692"/>
    </conflict>
</comment>
<comment type="sequence caution" evidence="5">
    <conflict type="frameshift">
        <sequence resource="EMBL-CDS" id="ABC86280"/>
    </conflict>
</comment>